<evidence type="ECO:0000255" key="1">
    <source>
        <dbReference type="HAMAP-Rule" id="MF_01287"/>
    </source>
</evidence>
<comment type="function">
    <text evidence="1">Is involved in the reduction of 2,3-digeranylgeranylglycerophospholipids (unsaturated archaeols) into 2,3-diphytanylglycerophospholipids (saturated archaeols) in the biosynthesis of archaeal membrane lipids. Catalyzes the formation of archaetidic acid (2,3-di-O-phytanyl-sn-glyceryl phosphate) from 2,3-di-O-geranylgeranylglyceryl phosphate (DGGGP) via the hydrogenation of each double bond of the isoprenoid chains. Is also probably able to reduce double bonds of geranyl groups in CDP-2,3-bis-O-(geranylgeranyl)-sn-glycerol and archaetidylserine, thus acting at various stages in the biosynthesis of archaeal membrane lipids.</text>
</comment>
<comment type="catalytic activity">
    <reaction evidence="1">
        <text>a 2,3-bis-O-phytanyl-sn-glycerol 1-phospholipid + 8 A = a 2,3-bis-O-(geranylgeranyl)-sn-glycerol 1-phospholipid + 8 AH2</text>
        <dbReference type="Rhea" id="RHEA:64376"/>
        <dbReference type="ChEBI" id="CHEBI:13193"/>
        <dbReference type="ChEBI" id="CHEBI:17499"/>
        <dbReference type="ChEBI" id="CHEBI:138139"/>
        <dbReference type="ChEBI" id="CHEBI:138140"/>
    </reaction>
    <physiologicalReaction direction="right-to-left" evidence="1">
        <dbReference type="Rhea" id="RHEA:64378"/>
    </physiologicalReaction>
</comment>
<comment type="catalytic activity">
    <reaction evidence="1">
        <text>2,3-bis-O-(phytanyl)-sn-glycerol 1-phosphate + 8 A = 2,3-bis-O-(geranylgeranyl)-sn-glycerol 1-phosphate + 8 AH2</text>
        <dbReference type="Rhea" id="RHEA:64368"/>
        <dbReference type="ChEBI" id="CHEBI:13193"/>
        <dbReference type="ChEBI" id="CHEBI:17499"/>
        <dbReference type="ChEBI" id="CHEBI:58837"/>
        <dbReference type="ChEBI" id="CHEBI:73125"/>
    </reaction>
    <physiologicalReaction direction="right-to-left" evidence="1">
        <dbReference type="Rhea" id="RHEA:64370"/>
    </physiologicalReaction>
</comment>
<comment type="catalytic activity">
    <reaction evidence="1">
        <text>CDP-2,3-bis-O-(geranylgeranyl)-sn-glycerol + 8 AH2 = CDP-2,3-bis-O-(phytanyl)-sn-glycerol + 8 A</text>
        <dbReference type="Rhea" id="RHEA:84207"/>
        <dbReference type="ChEBI" id="CHEBI:13193"/>
        <dbReference type="ChEBI" id="CHEBI:17499"/>
        <dbReference type="ChEBI" id="CHEBI:58838"/>
        <dbReference type="ChEBI" id="CHEBI:74004"/>
    </reaction>
    <physiologicalReaction direction="left-to-right" evidence="1">
        <dbReference type="Rhea" id="RHEA:84208"/>
    </physiologicalReaction>
</comment>
<comment type="catalytic activity">
    <reaction evidence="1">
        <text>archaetidylserine + 8 AH2 = 2,3-bis-O-phytanyl-sn-glycero-3-phospho-L-serine + 8 A</text>
        <dbReference type="Rhea" id="RHEA:84215"/>
        <dbReference type="ChEBI" id="CHEBI:13193"/>
        <dbReference type="ChEBI" id="CHEBI:17499"/>
        <dbReference type="ChEBI" id="CHEBI:71517"/>
        <dbReference type="ChEBI" id="CHEBI:74853"/>
    </reaction>
    <physiologicalReaction direction="left-to-right" evidence="1">
        <dbReference type="Rhea" id="RHEA:84216"/>
    </physiologicalReaction>
</comment>
<comment type="cofactor">
    <cofactor evidence="1">
        <name>FAD</name>
        <dbReference type="ChEBI" id="CHEBI:57692"/>
    </cofactor>
    <text evidence="1">Binds 1 FAD per subunit.</text>
</comment>
<comment type="pathway">
    <text evidence="1">Membrane lipid metabolism; glycerophospholipid metabolism.</text>
</comment>
<comment type="miscellaneous">
    <text evidence="1">Reduction reaction proceeds via syn addition of hydrogen for double bonds.</text>
</comment>
<comment type="similarity">
    <text evidence="1">Belongs to the geranylgeranyl reductase family. DGGGPL reductase subfamily.</text>
</comment>
<feature type="chain" id="PRO_0000351470" description="Digeranylgeranylglycerophospholipid reductase 1">
    <location>
        <begin position="1"/>
        <end position="397"/>
    </location>
</feature>
<feature type="binding site" evidence="1">
    <location>
        <position position="18"/>
    </location>
    <ligand>
        <name>FAD</name>
        <dbReference type="ChEBI" id="CHEBI:57692"/>
    </ligand>
</feature>
<feature type="binding site" evidence="1">
    <location>
        <position position="37"/>
    </location>
    <ligand>
        <name>FAD</name>
        <dbReference type="ChEBI" id="CHEBI:57692"/>
    </ligand>
</feature>
<feature type="binding site" evidence="1">
    <location>
        <position position="48"/>
    </location>
    <ligand>
        <name>FAD</name>
        <dbReference type="ChEBI" id="CHEBI:57692"/>
    </ligand>
</feature>
<feature type="binding site" evidence="1">
    <location>
        <position position="49"/>
    </location>
    <ligand>
        <name>FAD</name>
        <dbReference type="ChEBI" id="CHEBI:57692"/>
    </ligand>
</feature>
<feature type="binding site" evidence="1">
    <location>
        <position position="51"/>
    </location>
    <ligand>
        <name>FAD</name>
        <dbReference type="ChEBI" id="CHEBI:57692"/>
    </ligand>
</feature>
<feature type="binding site" evidence="1">
    <location>
        <position position="104"/>
    </location>
    <ligand>
        <name>FAD</name>
        <dbReference type="ChEBI" id="CHEBI:57692"/>
    </ligand>
</feature>
<feature type="binding site" evidence="1">
    <location>
        <position position="128"/>
    </location>
    <ligand>
        <name>FAD</name>
        <dbReference type="ChEBI" id="CHEBI:57692"/>
    </ligand>
</feature>
<feature type="binding site" evidence="1">
    <location>
        <position position="284"/>
    </location>
    <ligand>
        <name>FAD</name>
        <dbReference type="ChEBI" id="CHEBI:57692"/>
    </ligand>
</feature>
<feature type="binding site" evidence="1">
    <location>
        <position position="296"/>
    </location>
    <ligand>
        <name>FAD</name>
        <dbReference type="ChEBI" id="CHEBI:57692"/>
    </ligand>
</feature>
<feature type="binding site" evidence="1">
    <location>
        <position position="297"/>
    </location>
    <ligand>
        <name>FAD</name>
        <dbReference type="ChEBI" id="CHEBI:57692"/>
    </ligand>
</feature>
<proteinExistence type="inferred from homology"/>
<keyword id="KW-0274">FAD</keyword>
<keyword id="KW-0285">Flavoprotein</keyword>
<keyword id="KW-0444">Lipid biosynthesis</keyword>
<keyword id="KW-0443">Lipid metabolism</keyword>
<keyword id="KW-0560">Oxidoreductase</keyword>
<keyword id="KW-0594">Phospholipid biosynthesis</keyword>
<keyword id="KW-1208">Phospholipid metabolism</keyword>
<keyword id="KW-1185">Reference proteome</keyword>
<reference key="1">
    <citation type="journal article" date="1997" name="J. Bacteriol.">
        <title>Complete genome sequence of Methanobacterium thermoautotrophicum deltaH: functional analysis and comparative genomics.</title>
        <authorList>
            <person name="Smith D.R."/>
            <person name="Doucette-Stamm L.A."/>
            <person name="Deloughery C."/>
            <person name="Lee H.-M."/>
            <person name="Dubois J."/>
            <person name="Aldredge T."/>
            <person name="Bashirzadeh R."/>
            <person name="Blakely D."/>
            <person name="Cook R."/>
            <person name="Gilbert K."/>
            <person name="Harrison D."/>
            <person name="Hoang L."/>
            <person name="Keagle P."/>
            <person name="Lumm W."/>
            <person name="Pothier B."/>
            <person name="Qiu D."/>
            <person name="Spadafora R."/>
            <person name="Vicare R."/>
            <person name="Wang Y."/>
            <person name="Wierzbowski J."/>
            <person name="Gibson R."/>
            <person name="Jiwani N."/>
            <person name="Caruso A."/>
            <person name="Bush D."/>
            <person name="Safer H."/>
            <person name="Patwell D."/>
            <person name="Prabhakar S."/>
            <person name="McDougall S."/>
            <person name="Shimer G."/>
            <person name="Goyal A."/>
            <person name="Pietrovski S."/>
            <person name="Church G.M."/>
            <person name="Daniels C.J."/>
            <person name="Mao J.-I."/>
            <person name="Rice P."/>
            <person name="Noelling J."/>
            <person name="Reeve J.N."/>
        </authorList>
    </citation>
    <scope>NUCLEOTIDE SEQUENCE [LARGE SCALE GENOMIC DNA]</scope>
    <source>
        <strain>ATCC 29096 / DSM 1053 / JCM 10044 / NBRC 100330 / Delta H</strain>
    </source>
</reference>
<sequence>MIIMVTEVDVLVIGAGPAGSTAAKHAALGGADVLLIDKKSEIGAPKRCAEGVSIGGLESLGIEPNPRWITKKLDGVRMVSPNGTDVWLTSDKVELPEAGYILERKVFDKFMAMDAARAGSRIMVKTIATGMERTDDGYLVSAECMGEKFEIKARIVIAADGPESRVARWAGLNTATRPKDMESAAQFEMVGVEMEDNNCIEFYFGSVAPGGYALDIPEGDDIANVGLGVLSTETDKSAYEHLLEFVESCPATRNAQPVELNIGGDPVGGMPKKLVADSLMVVGDAAGQVNPLTGGGIISGMKGGMLAGQVAAAAVSEGDVTARRLGEYERLCREEIGDEISKYLKVKEYLLTLSDSELDSIAEAFQDVEFEKVSTTELVKKLIKVSPKALLKLGKLF</sequence>
<gene>
    <name type="ordered locus">MTH_277</name>
</gene>
<name>GGR1_METTH</name>
<organism>
    <name type="scientific">Methanothermobacter thermautotrophicus (strain ATCC 29096 / DSM 1053 / JCM 10044 / NBRC 100330 / Delta H)</name>
    <name type="common">Methanobacterium thermoautotrophicum</name>
    <dbReference type="NCBI Taxonomy" id="187420"/>
    <lineage>
        <taxon>Archaea</taxon>
        <taxon>Methanobacteriati</taxon>
        <taxon>Methanobacteriota</taxon>
        <taxon>Methanomada group</taxon>
        <taxon>Methanobacteria</taxon>
        <taxon>Methanobacteriales</taxon>
        <taxon>Methanobacteriaceae</taxon>
        <taxon>Methanothermobacter</taxon>
    </lineage>
</organism>
<protein>
    <recommendedName>
        <fullName evidence="1">Digeranylgeranylglycerophospholipid reductase 1</fullName>
        <shortName evidence="1">DGGGPL reductase 1</shortName>
        <ecNumber evidence="1">1.3.-.-</ecNumber>
    </recommendedName>
    <alternativeName>
        <fullName evidence="1">2,3-bis-O-geranylgeranylglyceryl phosphate reductase 1</fullName>
    </alternativeName>
    <alternativeName>
        <fullName evidence="1">Geranylgeranyl reductase 1</fullName>
        <shortName evidence="1">GGR 1</shortName>
    </alternativeName>
</protein>
<accession>O26377</accession>
<dbReference type="EC" id="1.3.-.-" evidence="1"/>
<dbReference type="EMBL" id="AE000666">
    <property type="protein sequence ID" value="AAB84783.1"/>
    <property type="molecule type" value="Genomic_DNA"/>
</dbReference>
<dbReference type="PIR" id="A69135">
    <property type="entry name" value="A69135"/>
</dbReference>
<dbReference type="SMR" id="O26377"/>
<dbReference type="STRING" id="187420.MTH_277"/>
<dbReference type="PaxDb" id="187420-MTH_277"/>
<dbReference type="EnsemblBacteria" id="AAB84783">
    <property type="protein sequence ID" value="AAB84783"/>
    <property type="gene ID" value="MTH_277"/>
</dbReference>
<dbReference type="KEGG" id="mth:MTH_277"/>
<dbReference type="PATRIC" id="fig|187420.15.peg.246"/>
<dbReference type="HOGENOM" id="CLU_024648_0_0_2"/>
<dbReference type="InParanoid" id="O26377"/>
<dbReference type="UniPathway" id="UPA00940"/>
<dbReference type="Proteomes" id="UP000005223">
    <property type="component" value="Chromosome"/>
</dbReference>
<dbReference type="GO" id="GO:0016020">
    <property type="term" value="C:membrane"/>
    <property type="evidence" value="ECO:0007669"/>
    <property type="project" value="GOC"/>
</dbReference>
<dbReference type="GO" id="GO:0050660">
    <property type="term" value="F:flavin adenine dinucleotide binding"/>
    <property type="evidence" value="ECO:0007669"/>
    <property type="project" value="UniProtKB-UniRule"/>
</dbReference>
<dbReference type="GO" id="GO:0045550">
    <property type="term" value="F:geranylgeranyl reductase activity"/>
    <property type="evidence" value="ECO:0007669"/>
    <property type="project" value="InterPro"/>
</dbReference>
<dbReference type="GO" id="GO:0016628">
    <property type="term" value="F:oxidoreductase activity, acting on the CH-CH group of donors, NAD or NADP as acceptor"/>
    <property type="evidence" value="ECO:0007669"/>
    <property type="project" value="InterPro"/>
</dbReference>
<dbReference type="GO" id="GO:0046474">
    <property type="term" value="P:glycerophospholipid biosynthetic process"/>
    <property type="evidence" value="ECO:0007669"/>
    <property type="project" value="UniProtKB-UniRule"/>
</dbReference>
<dbReference type="GO" id="GO:0046467">
    <property type="term" value="P:membrane lipid biosynthetic process"/>
    <property type="evidence" value="ECO:0007669"/>
    <property type="project" value="InterPro"/>
</dbReference>
<dbReference type="Gene3D" id="3.30.9.10">
    <property type="entry name" value="D-Amino Acid Oxidase, subunit A, domain 2"/>
    <property type="match status" value="1"/>
</dbReference>
<dbReference type="Gene3D" id="3.50.50.60">
    <property type="entry name" value="FAD/NAD(P)-binding domain"/>
    <property type="match status" value="1"/>
</dbReference>
<dbReference type="HAMAP" id="MF_01287">
    <property type="entry name" value="DGGGPL_reductase"/>
    <property type="match status" value="1"/>
</dbReference>
<dbReference type="InterPro" id="IPR023590">
    <property type="entry name" value="DGGGPL_reductase"/>
</dbReference>
<dbReference type="InterPro" id="IPR003953">
    <property type="entry name" value="FAD-dep_OxRdtase_2_FAD-bd"/>
</dbReference>
<dbReference type="InterPro" id="IPR036188">
    <property type="entry name" value="FAD/NAD-bd_sf"/>
</dbReference>
<dbReference type="InterPro" id="IPR011777">
    <property type="entry name" value="Geranylgeranyl_Rdtase_fam"/>
</dbReference>
<dbReference type="InterPro" id="IPR050407">
    <property type="entry name" value="Geranylgeranyl_reductase"/>
</dbReference>
<dbReference type="InterPro" id="IPR054715">
    <property type="entry name" value="GGR_cat"/>
</dbReference>
<dbReference type="NCBIfam" id="TIGR02032">
    <property type="entry name" value="GG-red-SF"/>
    <property type="match status" value="1"/>
</dbReference>
<dbReference type="PANTHER" id="PTHR42685:SF18">
    <property type="entry name" value="DIGERANYLGERANYLGLYCEROPHOSPHOLIPID REDUCTASE"/>
    <property type="match status" value="1"/>
</dbReference>
<dbReference type="PANTHER" id="PTHR42685">
    <property type="entry name" value="GERANYLGERANYL DIPHOSPHATE REDUCTASE"/>
    <property type="match status" value="1"/>
</dbReference>
<dbReference type="Pfam" id="PF00890">
    <property type="entry name" value="FAD_binding_2"/>
    <property type="match status" value="1"/>
</dbReference>
<dbReference type="Pfam" id="PF22578">
    <property type="entry name" value="GGR_cat"/>
    <property type="match status" value="1"/>
</dbReference>
<dbReference type="PRINTS" id="PR00420">
    <property type="entry name" value="RNGMNOXGNASE"/>
</dbReference>
<dbReference type="SUPFAM" id="SSF51905">
    <property type="entry name" value="FAD/NAD(P)-binding domain"/>
    <property type="match status" value="1"/>
</dbReference>